<sequence length="243" mass="28179">MSNSHYNNYQQQQPHSSNGDPEYQHQQMVHQPQRFSNGHGMKTVAVPDMCLFCFEVLDCELNNVDGPSVPVFSNDAYPLFVTWKIGRDKRLRGCIGTFSAMELHHGLREYALTSAFKDSRFAPISRDELPRLTVSVSILQNFEEAQGHLDWQLGVHGIRIEFLTERGCKRTATYLPQVATEQGWDQLQTIDSLLRKGGYRAAITPETRKSIKLTRYRSQEIQMHYKEYREYQERRAQFGKVQC</sequence>
<name>Y5902_DROME</name>
<protein>
    <recommendedName>
        <fullName>Uncharacterized protein CG5902</fullName>
    </recommendedName>
</protein>
<reference key="1">
    <citation type="journal article" date="2000" name="Science">
        <title>The genome sequence of Drosophila melanogaster.</title>
        <authorList>
            <person name="Adams M.D."/>
            <person name="Celniker S.E."/>
            <person name="Holt R.A."/>
            <person name="Evans C.A."/>
            <person name="Gocayne J.D."/>
            <person name="Amanatides P.G."/>
            <person name="Scherer S.E."/>
            <person name="Li P.W."/>
            <person name="Hoskins R.A."/>
            <person name="Galle R.F."/>
            <person name="George R.A."/>
            <person name="Lewis S.E."/>
            <person name="Richards S."/>
            <person name="Ashburner M."/>
            <person name="Henderson S.N."/>
            <person name="Sutton G.G."/>
            <person name="Wortman J.R."/>
            <person name="Yandell M.D."/>
            <person name="Zhang Q."/>
            <person name="Chen L.X."/>
            <person name="Brandon R.C."/>
            <person name="Rogers Y.-H.C."/>
            <person name="Blazej R.G."/>
            <person name="Champe M."/>
            <person name="Pfeiffer B.D."/>
            <person name="Wan K.H."/>
            <person name="Doyle C."/>
            <person name="Baxter E.G."/>
            <person name="Helt G."/>
            <person name="Nelson C.R."/>
            <person name="Miklos G.L.G."/>
            <person name="Abril J.F."/>
            <person name="Agbayani A."/>
            <person name="An H.-J."/>
            <person name="Andrews-Pfannkoch C."/>
            <person name="Baldwin D."/>
            <person name="Ballew R.M."/>
            <person name="Basu A."/>
            <person name="Baxendale J."/>
            <person name="Bayraktaroglu L."/>
            <person name="Beasley E.M."/>
            <person name="Beeson K.Y."/>
            <person name="Benos P.V."/>
            <person name="Berman B.P."/>
            <person name="Bhandari D."/>
            <person name="Bolshakov S."/>
            <person name="Borkova D."/>
            <person name="Botchan M.R."/>
            <person name="Bouck J."/>
            <person name="Brokstein P."/>
            <person name="Brottier P."/>
            <person name="Burtis K.C."/>
            <person name="Busam D.A."/>
            <person name="Butler H."/>
            <person name="Cadieu E."/>
            <person name="Center A."/>
            <person name="Chandra I."/>
            <person name="Cherry J.M."/>
            <person name="Cawley S."/>
            <person name="Dahlke C."/>
            <person name="Davenport L.B."/>
            <person name="Davies P."/>
            <person name="de Pablos B."/>
            <person name="Delcher A."/>
            <person name="Deng Z."/>
            <person name="Mays A.D."/>
            <person name="Dew I."/>
            <person name="Dietz S.M."/>
            <person name="Dodson K."/>
            <person name="Doup L.E."/>
            <person name="Downes M."/>
            <person name="Dugan-Rocha S."/>
            <person name="Dunkov B.C."/>
            <person name="Dunn P."/>
            <person name="Durbin K.J."/>
            <person name="Evangelista C.C."/>
            <person name="Ferraz C."/>
            <person name="Ferriera S."/>
            <person name="Fleischmann W."/>
            <person name="Fosler C."/>
            <person name="Gabrielian A.E."/>
            <person name="Garg N.S."/>
            <person name="Gelbart W.M."/>
            <person name="Glasser K."/>
            <person name="Glodek A."/>
            <person name="Gong F."/>
            <person name="Gorrell J.H."/>
            <person name="Gu Z."/>
            <person name="Guan P."/>
            <person name="Harris M."/>
            <person name="Harris N.L."/>
            <person name="Harvey D.A."/>
            <person name="Heiman T.J."/>
            <person name="Hernandez J.R."/>
            <person name="Houck J."/>
            <person name="Hostin D."/>
            <person name="Houston K.A."/>
            <person name="Howland T.J."/>
            <person name="Wei M.-H."/>
            <person name="Ibegwam C."/>
            <person name="Jalali M."/>
            <person name="Kalush F."/>
            <person name="Karpen G.H."/>
            <person name="Ke Z."/>
            <person name="Kennison J.A."/>
            <person name="Ketchum K.A."/>
            <person name="Kimmel B.E."/>
            <person name="Kodira C.D."/>
            <person name="Kraft C.L."/>
            <person name="Kravitz S."/>
            <person name="Kulp D."/>
            <person name="Lai Z."/>
            <person name="Lasko P."/>
            <person name="Lei Y."/>
            <person name="Levitsky A.A."/>
            <person name="Li J.H."/>
            <person name="Li Z."/>
            <person name="Liang Y."/>
            <person name="Lin X."/>
            <person name="Liu X."/>
            <person name="Mattei B."/>
            <person name="McIntosh T.C."/>
            <person name="McLeod M.P."/>
            <person name="McPherson D."/>
            <person name="Merkulov G."/>
            <person name="Milshina N.V."/>
            <person name="Mobarry C."/>
            <person name="Morris J."/>
            <person name="Moshrefi A."/>
            <person name="Mount S.M."/>
            <person name="Moy M."/>
            <person name="Murphy B."/>
            <person name="Murphy L."/>
            <person name="Muzny D.M."/>
            <person name="Nelson D.L."/>
            <person name="Nelson D.R."/>
            <person name="Nelson K.A."/>
            <person name="Nixon K."/>
            <person name="Nusskern D.R."/>
            <person name="Pacleb J.M."/>
            <person name="Palazzolo M."/>
            <person name="Pittman G.S."/>
            <person name="Pan S."/>
            <person name="Pollard J."/>
            <person name="Puri V."/>
            <person name="Reese M.G."/>
            <person name="Reinert K."/>
            <person name="Remington K."/>
            <person name="Saunders R.D.C."/>
            <person name="Scheeler F."/>
            <person name="Shen H."/>
            <person name="Shue B.C."/>
            <person name="Siden-Kiamos I."/>
            <person name="Simpson M."/>
            <person name="Skupski M.P."/>
            <person name="Smith T.J."/>
            <person name="Spier E."/>
            <person name="Spradling A.C."/>
            <person name="Stapleton M."/>
            <person name="Strong R."/>
            <person name="Sun E."/>
            <person name="Svirskas R."/>
            <person name="Tector C."/>
            <person name="Turner R."/>
            <person name="Venter E."/>
            <person name="Wang A.H."/>
            <person name="Wang X."/>
            <person name="Wang Z.-Y."/>
            <person name="Wassarman D.A."/>
            <person name="Weinstock G.M."/>
            <person name="Weissenbach J."/>
            <person name="Williams S.M."/>
            <person name="Woodage T."/>
            <person name="Worley K.C."/>
            <person name="Wu D."/>
            <person name="Yang S."/>
            <person name="Yao Q.A."/>
            <person name="Ye J."/>
            <person name="Yeh R.-F."/>
            <person name="Zaveri J.S."/>
            <person name="Zhan M."/>
            <person name="Zhang G."/>
            <person name="Zhao Q."/>
            <person name="Zheng L."/>
            <person name="Zheng X.H."/>
            <person name="Zhong F.N."/>
            <person name="Zhong W."/>
            <person name="Zhou X."/>
            <person name="Zhu S.C."/>
            <person name="Zhu X."/>
            <person name="Smith H.O."/>
            <person name="Gibbs R.A."/>
            <person name="Myers E.W."/>
            <person name="Rubin G.M."/>
            <person name="Venter J.C."/>
        </authorList>
    </citation>
    <scope>NUCLEOTIDE SEQUENCE [LARGE SCALE GENOMIC DNA]</scope>
    <source>
        <strain>Berkeley</strain>
    </source>
</reference>
<reference key="2">
    <citation type="journal article" date="2002" name="Genome Biol.">
        <title>Annotation of the Drosophila melanogaster euchromatic genome: a systematic review.</title>
        <authorList>
            <person name="Misra S."/>
            <person name="Crosby M.A."/>
            <person name="Mungall C.J."/>
            <person name="Matthews B.B."/>
            <person name="Campbell K.S."/>
            <person name="Hradecky P."/>
            <person name="Huang Y."/>
            <person name="Kaminker J.S."/>
            <person name="Millburn G.H."/>
            <person name="Prochnik S.E."/>
            <person name="Smith C.D."/>
            <person name="Tupy J.L."/>
            <person name="Whitfield E.J."/>
            <person name="Bayraktaroglu L."/>
            <person name="Berman B.P."/>
            <person name="Bettencourt B.R."/>
            <person name="Celniker S.E."/>
            <person name="de Grey A.D.N.J."/>
            <person name="Drysdale R.A."/>
            <person name="Harris N.L."/>
            <person name="Richter J."/>
            <person name="Russo S."/>
            <person name="Schroeder A.J."/>
            <person name="Shu S.Q."/>
            <person name="Stapleton M."/>
            <person name="Yamada C."/>
            <person name="Ashburner M."/>
            <person name="Gelbart W.M."/>
            <person name="Rubin G.M."/>
            <person name="Lewis S.E."/>
        </authorList>
    </citation>
    <scope>GENOME REANNOTATION</scope>
    <source>
        <strain>Berkeley</strain>
    </source>
</reference>
<reference key="3">
    <citation type="journal article" date="2002" name="Genome Biol.">
        <title>A Drosophila full-length cDNA resource.</title>
        <authorList>
            <person name="Stapleton M."/>
            <person name="Carlson J.W."/>
            <person name="Brokstein P."/>
            <person name="Yu C."/>
            <person name="Champe M."/>
            <person name="George R.A."/>
            <person name="Guarin H."/>
            <person name="Kronmiller B."/>
            <person name="Pacleb J.M."/>
            <person name="Park S."/>
            <person name="Wan K.H."/>
            <person name="Rubin G.M."/>
            <person name="Celniker S.E."/>
        </authorList>
    </citation>
    <scope>NUCLEOTIDE SEQUENCE [LARGE SCALE MRNA]</scope>
    <source>
        <strain>Berkeley</strain>
        <tissue>Embryo</tissue>
    </source>
</reference>
<gene>
    <name type="ORF">CG5902</name>
</gene>
<feature type="chain" id="PRO_0000142369" description="Uncharacterized protein CG5902">
    <location>
        <begin position="1"/>
        <end position="243"/>
    </location>
</feature>
<feature type="domain" description="AMMECR1" evidence="1">
    <location>
        <begin position="38"/>
        <end position="232"/>
    </location>
</feature>
<feature type="region of interest" description="Disordered" evidence="2">
    <location>
        <begin position="1"/>
        <end position="30"/>
    </location>
</feature>
<feature type="compositionally biased region" description="Low complexity" evidence="2">
    <location>
        <begin position="1"/>
        <end position="18"/>
    </location>
</feature>
<dbReference type="EMBL" id="AE014297">
    <property type="protein sequence ID" value="AAF56216.1"/>
    <property type="molecule type" value="Genomic_DNA"/>
</dbReference>
<dbReference type="EMBL" id="AE014297">
    <property type="protein sequence ID" value="AAN13966.1"/>
    <property type="molecule type" value="Genomic_DNA"/>
</dbReference>
<dbReference type="EMBL" id="AY118445">
    <property type="protein sequence ID" value="AAM48474.1"/>
    <property type="molecule type" value="mRNA"/>
</dbReference>
<dbReference type="RefSeq" id="NP_001163705.1">
    <property type="nucleotide sequence ID" value="NM_001170234.2"/>
</dbReference>
<dbReference type="RefSeq" id="NP_651201.1">
    <property type="nucleotide sequence ID" value="NM_142944.4"/>
</dbReference>
<dbReference type="RefSeq" id="NP_732929.1">
    <property type="nucleotide sequence ID" value="NM_170106.4"/>
</dbReference>
<dbReference type="SMR" id="Q9VCF0"/>
<dbReference type="BioGRID" id="67774">
    <property type="interactions" value="4"/>
</dbReference>
<dbReference type="FunCoup" id="Q9VCF0">
    <property type="interactions" value="407"/>
</dbReference>
<dbReference type="IntAct" id="Q9VCF0">
    <property type="interactions" value="6"/>
</dbReference>
<dbReference type="STRING" id="7227.FBpp0083890"/>
<dbReference type="PaxDb" id="7227-FBpp0083889"/>
<dbReference type="DNASU" id="42839"/>
<dbReference type="EnsemblMetazoa" id="FBtr0084501">
    <property type="protein sequence ID" value="FBpp0083889"/>
    <property type="gene ID" value="FBgn0039136"/>
</dbReference>
<dbReference type="EnsemblMetazoa" id="FBtr0084502">
    <property type="protein sequence ID" value="FBpp0083890"/>
    <property type="gene ID" value="FBgn0039136"/>
</dbReference>
<dbReference type="EnsemblMetazoa" id="FBtr0301165">
    <property type="protein sequence ID" value="FBpp0290388"/>
    <property type="gene ID" value="FBgn0039136"/>
</dbReference>
<dbReference type="GeneID" id="42839"/>
<dbReference type="KEGG" id="dme:Dmel_CG5902"/>
<dbReference type="UCSC" id="CG5902-RA">
    <property type="organism name" value="d. melanogaster"/>
</dbReference>
<dbReference type="AGR" id="FB:FBgn0039136"/>
<dbReference type="FlyBase" id="FBgn0039136">
    <property type="gene designation" value="CG5902"/>
</dbReference>
<dbReference type="VEuPathDB" id="VectorBase:FBgn0039136"/>
<dbReference type="eggNOG" id="KOG3274">
    <property type="taxonomic scope" value="Eukaryota"/>
</dbReference>
<dbReference type="GeneTree" id="ENSGT00390000010397"/>
<dbReference type="HOGENOM" id="CLU_052828_1_0_1"/>
<dbReference type="InParanoid" id="Q9VCF0"/>
<dbReference type="OMA" id="LFITWNK"/>
<dbReference type="OrthoDB" id="24630at2759"/>
<dbReference type="PhylomeDB" id="Q9VCF0"/>
<dbReference type="BioGRID-ORCS" id="42839">
    <property type="hits" value="0 hits in 3 CRISPR screens"/>
</dbReference>
<dbReference type="GenomeRNAi" id="42839"/>
<dbReference type="PRO" id="PR:Q9VCF0"/>
<dbReference type="Proteomes" id="UP000000803">
    <property type="component" value="Chromosome 3R"/>
</dbReference>
<dbReference type="Bgee" id="FBgn0039136">
    <property type="expression patterns" value="Expressed in T neuron T5d (Drosophila) in embryonic/larval optic lobe (Drosophila) and 151 other cell types or tissues"/>
</dbReference>
<dbReference type="ExpressionAtlas" id="Q9VCF0">
    <property type="expression patterns" value="baseline and differential"/>
</dbReference>
<dbReference type="FunFam" id="3.30.700.20:FF:000001">
    <property type="entry name" value="AMME syndrome candidate gene 1"/>
    <property type="match status" value="1"/>
</dbReference>
<dbReference type="Gene3D" id="3.30.700.20">
    <property type="entry name" value="Hypothetical protein ph0010, domain 1"/>
    <property type="match status" value="1"/>
</dbReference>
<dbReference type="InterPro" id="IPR023473">
    <property type="entry name" value="AMMECR1"/>
</dbReference>
<dbReference type="InterPro" id="IPR036071">
    <property type="entry name" value="AMMECR1_dom_sf"/>
</dbReference>
<dbReference type="InterPro" id="IPR002733">
    <property type="entry name" value="AMMECR1_domain"/>
</dbReference>
<dbReference type="InterPro" id="IPR027485">
    <property type="entry name" value="AMMECR1_N"/>
</dbReference>
<dbReference type="NCBIfam" id="TIGR00296">
    <property type="entry name" value="TIGR00296 family protein"/>
    <property type="match status" value="1"/>
</dbReference>
<dbReference type="PANTHER" id="PTHR13016:SF0">
    <property type="entry name" value="AMME SYNDROME CANDIDATE GENE 1 PROTEIN"/>
    <property type="match status" value="1"/>
</dbReference>
<dbReference type="PANTHER" id="PTHR13016">
    <property type="entry name" value="AMMECR1 HOMOLOG"/>
    <property type="match status" value="1"/>
</dbReference>
<dbReference type="Pfam" id="PF01871">
    <property type="entry name" value="AMMECR1"/>
    <property type="match status" value="1"/>
</dbReference>
<dbReference type="SUPFAM" id="SSF143447">
    <property type="entry name" value="AMMECR1-like"/>
    <property type="match status" value="1"/>
</dbReference>
<dbReference type="PROSITE" id="PS51112">
    <property type="entry name" value="AMMECR1"/>
    <property type="match status" value="1"/>
</dbReference>
<keyword id="KW-1185">Reference proteome</keyword>
<proteinExistence type="evidence at transcript level"/>
<organism>
    <name type="scientific">Drosophila melanogaster</name>
    <name type="common">Fruit fly</name>
    <dbReference type="NCBI Taxonomy" id="7227"/>
    <lineage>
        <taxon>Eukaryota</taxon>
        <taxon>Metazoa</taxon>
        <taxon>Ecdysozoa</taxon>
        <taxon>Arthropoda</taxon>
        <taxon>Hexapoda</taxon>
        <taxon>Insecta</taxon>
        <taxon>Pterygota</taxon>
        <taxon>Neoptera</taxon>
        <taxon>Endopterygota</taxon>
        <taxon>Diptera</taxon>
        <taxon>Brachycera</taxon>
        <taxon>Muscomorpha</taxon>
        <taxon>Ephydroidea</taxon>
        <taxon>Drosophilidae</taxon>
        <taxon>Drosophila</taxon>
        <taxon>Sophophora</taxon>
    </lineage>
</organism>
<accession>Q9VCF0</accession>
<accession>A4V3B3</accession>
<evidence type="ECO:0000255" key="1">
    <source>
        <dbReference type="PROSITE-ProRule" id="PRU00467"/>
    </source>
</evidence>
<evidence type="ECO:0000256" key="2">
    <source>
        <dbReference type="SAM" id="MobiDB-lite"/>
    </source>
</evidence>